<accession>A4QJY3</accession>
<reference key="1">
    <citation type="submission" date="2007-03" db="EMBL/GenBank/DDBJ databases">
        <title>Sequence analysis of Arabidopsis pumila JS2 chloroplast DNA.</title>
        <authorList>
            <person name="Hosouchi T."/>
            <person name="Tsuruoka H."/>
            <person name="Kotani H."/>
        </authorList>
    </citation>
    <scope>NUCLEOTIDE SEQUENCE [LARGE SCALE GENOMIC DNA]</scope>
</reference>
<evidence type="ECO:0000255" key="1">
    <source>
        <dbReference type="HAMAP-Rule" id="MF_01303"/>
    </source>
</evidence>
<geneLocation type="chloroplast"/>
<dbReference type="EC" id="1.97.1.12" evidence="1"/>
<dbReference type="EMBL" id="AP009368">
    <property type="protein sequence ID" value="BAF49991.1"/>
    <property type="molecule type" value="Genomic_DNA"/>
</dbReference>
<dbReference type="RefSeq" id="YP_001123166.1">
    <property type="nucleotide sequence ID" value="NC_009267.1"/>
</dbReference>
<dbReference type="SMR" id="A4QJY3"/>
<dbReference type="GeneID" id="4962414"/>
<dbReference type="GO" id="GO:0009535">
    <property type="term" value="C:chloroplast thylakoid membrane"/>
    <property type="evidence" value="ECO:0007669"/>
    <property type="project" value="UniProtKB-SubCell"/>
</dbReference>
<dbReference type="GO" id="GO:0009522">
    <property type="term" value="C:photosystem I"/>
    <property type="evidence" value="ECO:0007669"/>
    <property type="project" value="UniProtKB-KW"/>
</dbReference>
<dbReference type="GO" id="GO:0051539">
    <property type="term" value="F:4 iron, 4 sulfur cluster binding"/>
    <property type="evidence" value="ECO:0007669"/>
    <property type="project" value="UniProtKB-KW"/>
</dbReference>
<dbReference type="GO" id="GO:0009055">
    <property type="term" value="F:electron transfer activity"/>
    <property type="evidence" value="ECO:0007669"/>
    <property type="project" value="UniProtKB-UniRule"/>
</dbReference>
<dbReference type="GO" id="GO:0046872">
    <property type="term" value="F:metal ion binding"/>
    <property type="evidence" value="ECO:0007669"/>
    <property type="project" value="UniProtKB-KW"/>
</dbReference>
<dbReference type="GO" id="GO:0016491">
    <property type="term" value="F:oxidoreductase activity"/>
    <property type="evidence" value="ECO:0007669"/>
    <property type="project" value="UniProtKB-KW"/>
</dbReference>
<dbReference type="GO" id="GO:0009773">
    <property type="term" value="P:photosynthetic electron transport in photosystem I"/>
    <property type="evidence" value="ECO:0007669"/>
    <property type="project" value="InterPro"/>
</dbReference>
<dbReference type="FunFam" id="3.30.70.20:FF:000001">
    <property type="entry name" value="Photosystem I iron-sulfur center"/>
    <property type="match status" value="1"/>
</dbReference>
<dbReference type="Gene3D" id="3.30.70.20">
    <property type="match status" value="1"/>
</dbReference>
<dbReference type="HAMAP" id="MF_01303">
    <property type="entry name" value="PSI_PsaC"/>
    <property type="match status" value="1"/>
</dbReference>
<dbReference type="InterPro" id="IPR017896">
    <property type="entry name" value="4Fe4S_Fe-S-bd"/>
</dbReference>
<dbReference type="InterPro" id="IPR017900">
    <property type="entry name" value="4Fe4S_Fe_S_CS"/>
</dbReference>
<dbReference type="InterPro" id="IPR050157">
    <property type="entry name" value="PSI_iron-sulfur_center"/>
</dbReference>
<dbReference type="InterPro" id="IPR017491">
    <property type="entry name" value="PSI_PsaC"/>
</dbReference>
<dbReference type="NCBIfam" id="TIGR03048">
    <property type="entry name" value="PS_I_psaC"/>
    <property type="match status" value="1"/>
</dbReference>
<dbReference type="PANTHER" id="PTHR24960:SF79">
    <property type="entry name" value="PHOTOSYSTEM I IRON-SULFUR CENTER"/>
    <property type="match status" value="1"/>
</dbReference>
<dbReference type="PANTHER" id="PTHR24960">
    <property type="entry name" value="PHOTOSYSTEM I IRON-SULFUR CENTER-RELATED"/>
    <property type="match status" value="1"/>
</dbReference>
<dbReference type="Pfam" id="PF14697">
    <property type="entry name" value="Fer4_21"/>
    <property type="match status" value="1"/>
</dbReference>
<dbReference type="SUPFAM" id="SSF54862">
    <property type="entry name" value="4Fe-4S ferredoxins"/>
    <property type="match status" value="1"/>
</dbReference>
<dbReference type="PROSITE" id="PS00198">
    <property type="entry name" value="4FE4S_FER_1"/>
    <property type="match status" value="2"/>
</dbReference>
<dbReference type="PROSITE" id="PS51379">
    <property type="entry name" value="4FE4S_FER_2"/>
    <property type="match status" value="2"/>
</dbReference>
<gene>
    <name evidence="1" type="primary">psaC</name>
</gene>
<name>PSAC_OLIPU</name>
<comment type="function">
    <text evidence="1">Apoprotein for the two 4Fe-4S centers FA and FB of photosystem I (PSI); essential for photochemical activity. FB is the terminal electron acceptor of PSI, donating electrons to ferredoxin. The C-terminus interacts with PsaA/B/D and helps assemble the protein into the PSI complex. Required for binding of PsaD and PsaE to PSI. PSI is a plastocyanin-ferredoxin oxidoreductase, converting photonic excitation into a charge separation, which transfers an electron from the donor P700 chlorophyll pair to the spectroscopically characterized acceptors A0, A1, FX, FA and FB in turn.</text>
</comment>
<comment type="catalytic activity">
    <reaction evidence="1">
        <text>reduced [plastocyanin] + hnu + oxidized [2Fe-2S]-[ferredoxin] = oxidized [plastocyanin] + reduced [2Fe-2S]-[ferredoxin]</text>
        <dbReference type="Rhea" id="RHEA:30407"/>
        <dbReference type="Rhea" id="RHEA-COMP:10000"/>
        <dbReference type="Rhea" id="RHEA-COMP:10001"/>
        <dbReference type="Rhea" id="RHEA-COMP:10039"/>
        <dbReference type="Rhea" id="RHEA-COMP:10040"/>
        <dbReference type="ChEBI" id="CHEBI:29036"/>
        <dbReference type="ChEBI" id="CHEBI:30212"/>
        <dbReference type="ChEBI" id="CHEBI:33737"/>
        <dbReference type="ChEBI" id="CHEBI:33738"/>
        <dbReference type="ChEBI" id="CHEBI:49552"/>
        <dbReference type="EC" id="1.97.1.12"/>
    </reaction>
</comment>
<comment type="cofactor">
    <cofactor evidence="1">
        <name>[4Fe-4S] cluster</name>
        <dbReference type="ChEBI" id="CHEBI:49883"/>
    </cofactor>
    <text evidence="1">Binds 2 [4Fe-4S] clusters. Cluster 2 is most probably the spectroscopically characterized electron acceptor FA and cluster 1 is most probably FB.</text>
</comment>
<comment type="subunit">
    <text evidence="1">The eukaryotic PSI reaction center is composed of at least 11 subunits.</text>
</comment>
<comment type="subcellular location">
    <subcellularLocation>
        <location evidence="1">Plastid</location>
        <location evidence="1">Chloroplast thylakoid membrane</location>
        <topology evidence="1">Peripheral membrane protein</topology>
        <orientation evidence="1">Stromal side</orientation>
    </subcellularLocation>
</comment>
<feature type="chain" id="PRO_0000292124" description="Photosystem I iron-sulfur center">
    <location>
        <begin position="1"/>
        <end position="81"/>
    </location>
</feature>
<feature type="domain" description="4Fe-4S ferredoxin-type 1" evidence="1">
    <location>
        <begin position="2"/>
        <end position="31"/>
    </location>
</feature>
<feature type="domain" description="4Fe-4S ferredoxin-type 2" evidence="1">
    <location>
        <begin position="39"/>
        <end position="68"/>
    </location>
</feature>
<feature type="binding site" evidence="1">
    <location>
        <position position="11"/>
    </location>
    <ligand>
        <name>[4Fe-4S] cluster</name>
        <dbReference type="ChEBI" id="CHEBI:49883"/>
        <label>1</label>
    </ligand>
</feature>
<feature type="binding site" evidence="1">
    <location>
        <position position="14"/>
    </location>
    <ligand>
        <name>[4Fe-4S] cluster</name>
        <dbReference type="ChEBI" id="CHEBI:49883"/>
        <label>1</label>
    </ligand>
</feature>
<feature type="binding site" evidence="1">
    <location>
        <position position="17"/>
    </location>
    <ligand>
        <name>[4Fe-4S] cluster</name>
        <dbReference type="ChEBI" id="CHEBI:49883"/>
        <label>1</label>
    </ligand>
</feature>
<feature type="binding site" evidence="1">
    <location>
        <position position="21"/>
    </location>
    <ligand>
        <name>[4Fe-4S] cluster</name>
        <dbReference type="ChEBI" id="CHEBI:49883"/>
        <label>2</label>
    </ligand>
</feature>
<feature type="binding site" evidence="1">
    <location>
        <position position="48"/>
    </location>
    <ligand>
        <name>[4Fe-4S] cluster</name>
        <dbReference type="ChEBI" id="CHEBI:49883"/>
        <label>2</label>
    </ligand>
</feature>
<feature type="binding site" evidence="1">
    <location>
        <position position="51"/>
    </location>
    <ligand>
        <name>[4Fe-4S] cluster</name>
        <dbReference type="ChEBI" id="CHEBI:49883"/>
        <label>2</label>
    </ligand>
</feature>
<feature type="binding site" evidence="1">
    <location>
        <position position="54"/>
    </location>
    <ligand>
        <name>[4Fe-4S] cluster</name>
        <dbReference type="ChEBI" id="CHEBI:49883"/>
        <label>2</label>
    </ligand>
</feature>
<feature type="binding site" evidence="1">
    <location>
        <position position="58"/>
    </location>
    <ligand>
        <name>[4Fe-4S] cluster</name>
        <dbReference type="ChEBI" id="CHEBI:49883"/>
        <label>1</label>
    </ligand>
</feature>
<protein>
    <recommendedName>
        <fullName evidence="1">Photosystem I iron-sulfur center</fullName>
        <ecNumber evidence="1">1.97.1.12</ecNumber>
    </recommendedName>
    <alternativeName>
        <fullName evidence="1">9 kDa polypeptide</fullName>
    </alternativeName>
    <alternativeName>
        <fullName evidence="1">PSI-C</fullName>
    </alternativeName>
    <alternativeName>
        <fullName evidence="1">Photosystem I subunit VII</fullName>
    </alternativeName>
    <alternativeName>
        <fullName evidence="1">PsaC</fullName>
    </alternativeName>
</protein>
<keyword id="KW-0004">4Fe-4S</keyword>
<keyword id="KW-0150">Chloroplast</keyword>
<keyword id="KW-0249">Electron transport</keyword>
<keyword id="KW-0408">Iron</keyword>
<keyword id="KW-0411">Iron-sulfur</keyword>
<keyword id="KW-0472">Membrane</keyword>
<keyword id="KW-0479">Metal-binding</keyword>
<keyword id="KW-0560">Oxidoreductase</keyword>
<keyword id="KW-0602">Photosynthesis</keyword>
<keyword id="KW-0603">Photosystem I</keyword>
<keyword id="KW-0934">Plastid</keyword>
<keyword id="KW-0677">Repeat</keyword>
<keyword id="KW-0793">Thylakoid</keyword>
<keyword id="KW-0813">Transport</keyword>
<organism>
    <name type="scientific">Olimarabidopsis pumila</name>
    <name type="common">Dwarf rocket</name>
    <name type="synonym">Arabidopsis griffithiana</name>
    <dbReference type="NCBI Taxonomy" id="74718"/>
    <lineage>
        <taxon>Eukaryota</taxon>
        <taxon>Viridiplantae</taxon>
        <taxon>Streptophyta</taxon>
        <taxon>Embryophyta</taxon>
        <taxon>Tracheophyta</taxon>
        <taxon>Spermatophyta</taxon>
        <taxon>Magnoliopsida</taxon>
        <taxon>eudicotyledons</taxon>
        <taxon>Gunneridae</taxon>
        <taxon>Pentapetalae</taxon>
        <taxon>rosids</taxon>
        <taxon>malvids</taxon>
        <taxon>Brassicales</taxon>
        <taxon>Brassicaceae</taxon>
        <taxon>Alyssopsideae</taxon>
        <taxon>Olimarabidopsis</taxon>
    </lineage>
</organism>
<proteinExistence type="inferred from homology"/>
<sequence>MSHSVKIYDTCIGCTQCVRACPTDVLEMIPWDGCKAKQIASAPRTEDCVGCKRCESACPTDFLSVRVYLWHETTRSMGLAY</sequence>